<feature type="chain" id="PRO_0000192036" description="Hydroxymethylpyrimidine/phosphomethylpyrimidine kinase">
    <location>
        <begin position="1"/>
        <end position="263"/>
    </location>
</feature>
<feature type="binding site" evidence="1">
    <location>
        <position position="44"/>
    </location>
    <ligand>
        <name>4-amino-5-hydroxymethyl-2-methylpyrimidine</name>
        <dbReference type="ChEBI" id="CHEBI:16892"/>
    </ligand>
</feature>
<feature type="sequence conflict" description="In Ref. 1; AAC26228." evidence="3" ref="1">
    <original>L</original>
    <variation>F</variation>
    <location>
        <position position="243"/>
    </location>
</feature>
<feature type="sequence conflict" description="In Ref. 1; AAC26228." evidence="3" ref="1">
    <original>L</original>
    <variation>F</variation>
    <location>
        <position position="247"/>
    </location>
</feature>
<name>THID_SYNE7</name>
<keyword id="KW-0067">ATP-binding</keyword>
<keyword id="KW-0418">Kinase</keyword>
<keyword id="KW-0547">Nucleotide-binding</keyword>
<keyword id="KW-1185">Reference proteome</keyword>
<keyword id="KW-0784">Thiamine biosynthesis</keyword>
<keyword id="KW-0808">Transferase</keyword>
<accession>O85786</accession>
<accession>Q31KL0</accession>
<comment type="function">
    <text evidence="2">Catalyzes the phosphorylation of hydroxymethylpyrimidine phosphate (HMP-P) to HMP-PP, and of HMP to HMP-P.</text>
</comment>
<comment type="catalytic activity">
    <reaction evidence="2">
        <text>4-amino-5-hydroxymethyl-2-methylpyrimidine + ATP = 4-amino-2-methyl-5-(phosphooxymethyl)pyrimidine + ADP + H(+)</text>
        <dbReference type="Rhea" id="RHEA:23096"/>
        <dbReference type="ChEBI" id="CHEBI:15378"/>
        <dbReference type="ChEBI" id="CHEBI:16892"/>
        <dbReference type="ChEBI" id="CHEBI:30616"/>
        <dbReference type="ChEBI" id="CHEBI:58354"/>
        <dbReference type="ChEBI" id="CHEBI:456216"/>
        <dbReference type="EC" id="2.7.1.49"/>
    </reaction>
</comment>
<comment type="catalytic activity">
    <reaction evidence="2">
        <text>4-amino-2-methyl-5-(phosphooxymethyl)pyrimidine + ATP = 4-amino-2-methyl-5-(diphosphooxymethyl)pyrimidine + ADP</text>
        <dbReference type="Rhea" id="RHEA:19893"/>
        <dbReference type="ChEBI" id="CHEBI:30616"/>
        <dbReference type="ChEBI" id="CHEBI:57841"/>
        <dbReference type="ChEBI" id="CHEBI:58354"/>
        <dbReference type="ChEBI" id="CHEBI:456216"/>
        <dbReference type="EC" id="2.7.4.7"/>
    </reaction>
</comment>
<comment type="pathway">
    <text>Cofactor biosynthesis; thiamine diphosphate biosynthesis; 4-amino-2-methyl-5-diphosphomethylpyrimidine from 5-amino-1-(5-phospho-D-ribosyl)imidazole: step 2/3.</text>
</comment>
<comment type="pathway">
    <text>Cofactor biosynthesis; thiamine diphosphate biosynthesis; 4-amino-2-methyl-5-diphosphomethylpyrimidine from 5-amino-1-(5-phospho-D-ribosyl)imidazole: step 3/3.</text>
</comment>
<comment type="similarity">
    <text evidence="3">Belongs to the ThiD family.</text>
</comment>
<evidence type="ECO:0000250" key="1"/>
<evidence type="ECO:0000250" key="2">
    <source>
        <dbReference type="UniProtKB" id="P76422"/>
    </source>
</evidence>
<evidence type="ECO:0000305" key="3"/>
<dbReference type="EC" id="2.7.1.49" evidence="2"/>
<dbReference type="EC" id="2.7.4.7" evidence="2"/>
<dbReference type="EMBL" id="AF076530">
    <property type="protein sequence ID" value="AAC26228.1"/>
    <property type="molecule type" value="Genomic_DNA"/>
</dbReference>
<dbReference type="EMBL" id="CP000100">
    <property type="protein sequence ID" value="ABB58409.1"/>
    <property type="molecule type" value="Genomic_DNA"/>
</dbReference>
<dbReference type="PIR" id="T51093">
    <property type="entry name" value="T51093"/>
</dbReference>
<dbReference type="RefSeq" id="WP_011378435.1">
    <property type="nucleotide sequence ID" value="NZ_JACJTX010000001.1"/>
</dbReference>
<dbReference type="SMR" id="O85786"/>
<dbReference type="STRING" id="1140.Synpcc7942_2379"/>
<dbReference type="PaxDb" id="1140-Synpcc7942_2379"/>
<dbReference type="GeneID" id="72431267"/>
<dbReference type="KEGG" id="syf:Synpcc7942_2379"/>
<dbReference type="eggNOG" id="COG0351">
    <property type="taxonomic scope" value="Bacteria"/>
</dbReference>
<dbReference type="HOGENOM" id="CLU_020520_0_0_3"/>
<dbReference type="OrthoDB" id="9810880at2"/>
<dbReference type="BioCyc" id="SYNEL:SYNPCC7942_2379-MONOMER"/>
<dbReference type="UniPathway" id="UPA00060">
    <property type="reaction ID" value="UER00137"/>
</dbReference>
<dbReference type="UniPathway" id="UPA00060">
    <property type="reaction ID" value="UER00138"/>
</dbReference>
<dbReference type="Proteomes" id="UP000889800">
    <property type="component" value="Chromosome"/>
</dbReference>
<dbReference type="GO" id="GO:0005829">
    <property type="term" value="C:cytosol"/>
    <property type="evidence" value="ECO:0007669"/>
    <property type="project" value="TreeGrafter"/>
</dbReference>
<dbReference type="GO" id="GO:0005524">
    <property type="term" value="F:ATP binding"/>
    <property type="evidence" value="ECO:0007669"/>
    <property type="project" value="UniProtKB-KW"/>
</dbReference>
<dbReference type="GO" id="GO:0008902">
    <property type="term" value="F:hydroxymethylpyrimidine kinase activity"/>
    <property type="evidence" value="ECO:0007669"/>
    <property type="project" value="UniProtKB-EC"/>
</dbReference>
<dbReference type="GO" id="GO:0008972">
    <property type="term" value="F:phosphomethylpyrimidine kinase activity"/>
    <property type="evidence" value="ECO:0007669"/>
    <property type="project" value="UniProtKB-EC"/>
</dbReference>
<dbReference type="GO" id="GO:0009228">
    <property type="term" value="P:thiamine biosynthetic process"/>
    <property type="evidence" value="ECO:0007669"/>
    <property type="project" value="UniProtKB-KW"/>
</dbReference>
<dbReference type="GO" id="GO:0009229">
    <property type="term" value="P:thiamine diphosphate biosynthetic process"/>
    <property type="evidence" value="ECO:0007669"/>
    <property type="project" value="UniProtKB-UniPathway"/>
</dbReference>
<dbReference type="CDD" id="cd01169">
    <property type="entry name" value="HMPP_kinase"/>
    <property type="match status" value="1"/>
</dbReference>
<dbReference type="FunFam" id="3.40.1190.20:FF:000003">
    <property type="entry name" value="Phosphomethylpyrimidine kinase ThiD"/>
    <property type="match status" value="1"/>
</dbReference>
<dbReference type="Gene3D" id="3.40.1190.20">
    <property type="match status" value="1"/>
</dbReference>
<dbReference type="InterPro" id="IPR004399">
    <property type="entry name" value="HMP/HMP-P_kinase_dom"/>
</dbReference>
<dbReference type="InterPro" id="IPR013749">
    <property type="entry name" value="PM/HMP-P_kinase-1"/>
</dbReference>
<dbReference type="InterPro" id="IPR029056">
    <property type="entry name" value="Ribokinase-like"/>
</dbReference>
<dbReference type="NCBIfam" id="TIGR00097">
    <property type="entry name" value="HMP-P_kinase"/>
    <property type="match status" value="1"/>
</dbReference>
<dbReference type="PANTHER" id="PTHR20858:SF17">
    <property type="entry name" value="HYDROXYMETHYLPYRIMIDINE_PHOSPHOMETHYLPYRIMIDINE KINASE THI20-RELATED"/>
    <property type="match status" value="1"/>
</dbReference>
<dbReference type="PANTHER" id="PTHR20858">
    <property type="entry name" value="PHOSPHOMETHYLPYRIMIDINE KINASE"/>
    <property type="match status" value="1"/>
</dbReference>
<dbReference type="Pfam" id="PF08543">
    <property type="entry name" value="Phos_pyr_kin"/>
    <property type="match status" value="1"/>
</dbReference>
<dbReference type="SUPFAM" id="SSF53613">
    <property type="entry name" value="Ribokinase-like"/>
    <property type="match status" value="1"/>
</dbReference>
<reference key="1">
    <citation type="submission" date="1998-07" db="EMBL/GenBank/DDBJ databases">
        <title>Cloning and sequence of ftsZ and flanking regions from the cyanobacterium Synechococcus sp. PCC7942.</title>
        <authorList>
            <person name="Mori T."/>
            <person name="Golden S.S."/>
            <person name="Johnson C.H."/>
        </authorList>
    </citation>
    <scope>NUCLEOTIDE SEQUENCE [GENOMIC DNA]</scope>
</reference>
<reference key="2">
    <citation type="submission" date="2005-08" db="EMBL/GenBank/DDBJ databases">
        <title>Complete sequence of chromosome 1 of Synechococcus elongatus PCC 7942.</title>
        <authorList>
            <consortium name="US DOE Joint Genome Institute"/>
            <person name="Copeland A."/>
            <person name="Lucas S."/>
            <person name="Lapidus A."/>
            <person name="Barry K."/>
            <person name="Detter J.C."/>
            <person name="Glavina T."/>
            <person name="Hammon N."/>
            <person name="Israni S."/>
            <person name="Pitluck S."/>
            <person name="Schmutz J."/>
            <person name="Larimer F."/>
            <person name="Land M."/>
            <person name="Kyrpides N."/>
            <person name="Lykidis A."/>
            <person name="Golden S."/>
            <person name="Richardson P."/>
        </authorList>
    </citation>
    <scope>NUCLEOTIDE SEQUENCE [LARGE SCALE GENOMIC DNA]</scope>
    <source>
        <strain>ATCC 33912 / PCC 7942 / FACHB-805</strain>
    </source>
</reference>
<gene>
    <name type="primary">thiD</name>
    <name type="ordered locus">Synpcc7942_2379</name>
</gene>
<protein>
    <recommendedName>
        <fullName>Hydroxymethylpyrimidine/phosphomethylpyrimidine kinase</fullName>
        <ecNumber evidence="2">2.7.1.49</ecNumber>
        <ecNumber evidence="2">2.7.4.7</ecNumber>
    </recommendedName>
    <alternativeName>
        <fullName>Hydroxymethylpyrimidine kinase</fullName>
        <shortName>HMP kinase</shortName>
    </alternativeName>
    <alternativeName>
        <fullName>Hydroxymethylpyrimidine phosphate kinase</fullName>
        <shortName>HMP-P kinase</shortName>
        <shortName>HMP-phosphate kinase</shortName>
        <shortName>HMPP kinase</shortName>
    </alternativeName>
</protein>
<organism>
    <name type="scientific">Synechococcus elongatus (strain ATCC 33912 / PCC 7942 / FACHB-805)</name>
    <name type="common">Anacystis nidulans R2</name>
    <dbReference type="NCBI Taxonomy" id="1140"/>
    <lineage>
        <taxon>Bacteria</taxon>
        <taxon>Bacillati</taxon>
        <taxon>Cyanobacteriota</taxon>
        <taxon>Cyanophyceae</taxon>
        <taxon>Synechococcales</taxon>
        <taxon>Synechococcaceae</taxon>
        <taxon>Synechococcus</taxon>
    </lineage>
</organism>
<proteinExistence type="inferred from homology"/>
<sequence>MAVPIALTIAGSDSGGGAGIQADLRTFAFHQVHGTCAITCVTAQNTLGVTRVDAIAPAGVAAQLDAVLSDLPPQALKTGMLLNAEIMEVVAGTIAPLFIPRIIDPVMVSRTGAVLIDQAAIAVLRDHLLPLATVLTPNRYEAQLLAGMDIQDAADLDRAARIIRDLGPQAVLIKGGAATGDWHGVDWWWDGQQSHILKTEAIATPHTHGSGCTLAAAIAANAALGLEILAAAQAAKHYVTKALRHSLAIGQGQGPLGHFYPLF</sequence>